<geneLocation type="chloroplast"/>
<sequence length="119" mass="13581">MQTNTSNKKIRAVAKHIHMSPHKVRRVVSQIRGRSYEQALMILEFMPYRACNPILQLLSSAAANANHNFGLSKTNLFISEIQVNKGTFFKRFQPRAQGRGYPIHKPTCHITIVLNILPK</sequence>
<feature type="chain" id="PRO_0000125309" description="Large ribosomal subunit protein uL22c">
    <location>
        <begin position="1"/>
        <end position="119"/>
    </location>
</feature>
<keyword id="KW-0150">Chloroplast</keyword>
<keyword id="KW-0934">Plastid</keyword>
<keyword id="KW-0687">Ribonucleoprotein</keyword>
<keyword id="KW-0689">Ribosomal protein</keyword>
<keyword id="KW-0694">RNA-binding</keyword>
<keyword id="KW-0699">rRNA-binding</keyword>
<protein>
    <recommendedName>
        <fullName evidence="2">Large ribosomal subunit protein uL22c</fullName>
    </recommendedName>
    <alternativeName>
        <fullName>50S ribosomal protein L22, chloroplastic</fullName>
    </alternativeName>
</protein>
<reference key="1">
    <citation type="journal article" date="1988" name="J. Mol. Biol.">
        <title>Structure and organization of Marchantia polymorpha chloroplast genome. III. Gene organization of the large single copy region from rbcL to trnI(CAU).</title>
        <authorList>
            <person name="Fukuzawa H."/>
            <person name="Kohchi T."/>
            <person name="Sano T."/>
            <person name="Shirai H."/>
            <person name="Umesono K."/>
            <person name="Inokuchi H."/>
            <person name="Ozeki H."/>
            <person name="Ohyama K."/>
        </authorList>
    </citation>
    <scope>NUCLEOTIDE SEQUENCE [GENOMIC DNA]</scope>
</reference>
<reference key="2">
    <citation type="journal article" date="1986" name="Nature">
        <title>Chloroplast gene organization deduced from complete sequence of liverwort Marchantia polymorpha chloroplast DNA.</title>
        <authorList>
            <person name="Ohyama K."/>
            <person name="Fukuzawa H."/>
            <person name="Kohchi T."/>
            <person name="Shirai H."/>
            <person name="Sano T."/>
            <person name="Sano S."/>
            <person name="Umesono K."/>
            <person name="Shiki Y."/>
            <person name="Takeuchi M."/>
            <person name="Chang Z."/>
            <person name="Aota S."/>
            <person name="Inokuchi H."/>
            <person name="Ozeki H."/>
        </authorList>
    </citation>
    <scope>NUCLEOTIDE SEQUENCE [LARGE SCALE GENOMIC DNA]</scope>
</reference>
<accession>P06388</accession>
<comment type="function">
    <text evidence="1">This protein binds specifically to 23S rRNA.</text>
</comment>
<comment type="function">
    <text evidence="1">The globular domain of the protein is located near the polypeptide exit tunnel on the outside of the subunit, while an extended beta-hairpin is found that lines the wall of the exit tunnel in the center of the 70S ribosome.</text>
</comment>
<comment type="subunit">
    <text evidence="1">Part of the 50S ribosomal subunit.</text>
</comment>
<comment type="subcellular location">
    <subcellularLocation>
        <location>Plastid</location>
        <location>Chloroplast</location>
    </subcellularLocation>
</comment>
<comment type="similarity">
    <text evidence="2">Belongs to the universal ribosomal protein uL22 family.</text>
</comment>
<dbReference type="EMBL" id="X04465">
    <property type="protein sequence ID" value="CAA28125.1"/>
    <property type="molecule type" value="Genomic_DNA"/>
</dbReference>
<dbReference type="PIR" id="A02812">
    <property type="entry name" value="R5LV22"/>
</dbReference>
<dbReference type="RefSeq" id="NP_039339.1">
    <property type="nucleotide sequence ID" value="NC_001319.1"/>
</dbReference>
<dbReference type="SMR" id="P06388"/>
<dbReference type="GeneID" id="2702572"/>
<dbReference type="GO" id="GO:0009507">
    <property type="term" value="C:chloroplast"/>
    <property type="evidence" value="ECO:0007669"/>
    <property type="project" value="UniProtKB-SubCell"/>
</dbReference>
<dbReference type="GO" id="GO:0015934">
    <property type="term" value="C:large ribosomal subunit"/>
    <property type="evidence" value="ECO:0007669"/>
    <property type="project" value="InterPro"/>
</dbReference>
<dbReference type="GO" id="GO:0019843">
    <property type="term" value="F:rRNA binding"/>
    <property type="evidence" value="ECO:0007669"/>
    <property type="project" value="UniProtKB-UniRule"/>
</dbReference>
<dbReference type="GO" id="GO:0003735">
    <property type="term" value="F:structural constituent of ribosome"/>
    <property type="evidence" value="ECO:0007669"/>
    <property type="project" value="InterPro"/>
</dbReference>
<dbReference type="GO" id="GO:0006412">
    <property type="term" value="P:translation"/>
    <property type="evidence" value="ECO:0007669"/>
    <property type="project" value="UniProtKB-UniRule"/>
</dbReference>
<dbReference type="CDD" id="cd00336">
    <property type="entry name" value="Ribosomal_L22"/>
    <property type="match status" value="1"/>
</dbReference>
<dbReference type="FunFam" id="3.90.470.10:FF:000004">
    <property type="entry name" value="50S ribosomal protein L22, chloroplastic"/>
    <property type="match status" value="1"/>
</dbReference>
<dbReference type="Gene3D" id="3.90.470.10">
    <property type="entry name" value="Ribosomal protein L22/L17"/>
    <property type="match status" value="1"/>
</dbReference>
<dbReference type="HAMAP" id="MF_01331_B">
    <property type="entry name" value="Ribosomal_uL22_B"/>
    <property type="match status" value="1"/>
</dbReference>
<dbReference type="InterPro" id="IPR001063">
    <property type="entry name" value="Ribosomal_uL22"/>
</dbReference>
<dbReference type="InterPro" id="IPR005727">
    <property type="entry name" value="Ribosomal_uL22_bac/chlpt-type"/>
</dbReference>
<dbReference type="InterPro" id="IPR047867">
    <property type="entry name" value="Ribosomal_uL22_bac/org-type"/>
</dbReference>
<dbReference type="InterPro" id="IPR018260">
    <property type="entry name" value="Ribosomal_uL22_CS"/>
</dbReference>
<dbReference type="InterPro" id="IPR036394">
    <property type="entry name" value="Ribosomal_uL22_sf"/>
</dbReference>
<dbReference type="NCBIfam" id="TIGR01044">
    <property type="entry name" value="rplV_bact"/>
    <property type="match status" value="1"/>
</dbReference>
<dbReference type="PANTHER" id="PTHR13501">
    <property type="entry name" value="CHLOROPLAST 50S RIBOSOMAL PROTEIN L22-RELATED"/>
    <property type="match status" value="1"/>
</dbReference>
<dbReference type="PANTHER" id="PTHR13501:SF10">
    <property type="entry name" value="LARGE RIBOSOMAL SUBUNIT PROTEIN UL22M"/>
    <property type="match status" value="1"/>
</dbReference>
<dbReference type="Pfam" id="PF00237">
    <property type="entry name" value="Ribosomal_L22"/>
    <property type="match status" value="1"/>
</dbReference>
<dbReference type="SUPFAM" id="SSF54843">
    <property type="entry name" value="Ribosomal protein L22"/>
    <property type="match status" value="1"/>
</dbReference>
<dbReference type="PROSITE" id="PS00464">
    <property type="entry name" value="RIBOSOMAL_L22"/>
    <property type="match status" value="1"/>
</dbReference>
<proteinExistence type="inferred from homology"/>
<evidence type="ECO:0000250" key="1"/>
<evidence type="ECO:0000305" key="2"/>
<gene>
    <name type="primary">rpl22</name>
</gene>
<name>RK22_MARPO</name>
<organism>
    <name type="scientific">Marchantia polymorpha</name>
    <name type="common">Common liverwort</name>
    <name type="synonym">Marchantia aquatica</name>
    <dbReference type="NCBI Taxonomy" id="3197"/>
    <lineage>
        <taxon>Eukaryota</taxon>
        <taxon>Viridiplantae</taxon>
        <taxon>Streptophyta</taxon>
        <taxon>Embryophyta</taxon>
        <taxon>Marchantiophyta</taxon>
        <taxon>Marchantiopsida</taxon>
        <taxon>Marchantiidae</taxon>
        <taxon>Marchantiales</taxon>
        <taxon>Marchantiaceae</taxon>
        <taxon>Marchantia</taxon>
    </lineage>
</organism>